<accession>E1RHR2</accession>
<reference key="1">
    <citation type="journal article" date="2010" name="Stand. Genomic Sci.">
        <title>Complete genome sequence of Methanoplanus petrolearius type strain (SEBR 4847).</title>
        <authorList>
            <person name="Brambilla E."/>
            <person name="Djao O.D."/>
            <person name="Daligault H."/>
            <person name="Lapidus A."/>
            <person name="Lucas S."/>
            <person name="Hammon N."/>
            <person name="Nolan M."/>
            <person name="Tice H."/>
            <person name="Cheng J.F."/>
            <person name="Han C."/>
            <person name="Tapia R."/>
            <person name="Goodwin L."/>
            <person name="Pitluck S."/>
            <person name="Liolios K."/>
            <person name="Ivanova N."/>
            <person name="Mavromatis K."/>
            <person name="Mikhailova N."/>
            <person name="Pati A."/>
            <person name="Chen A."/>
            <person name="Palaniappan K."/>
            <person name="Land M."/>
            <person name="Hauser L."/>
            <person name="Chang Y.J."/>
            <person name="Jeffries C.D."/>
            <person name="Rohde M."/>
            <person name="Spring S."/>
            <person name="Sikorski J."/>
            <person name="Goker M."/>
            <person name="Woyke T."/>
            <person name="Bristow J."/>
            <person name="Eisen J.A."/>
            <person name="Markowitz V."/>
            <person name="Hugenholtz P."/>
            <person name="Kyrpides N.C."/>
            <person name="Klenk H.P."/>
        </authorList>
    </citation>
    <scope>NUCLEOTIDE SEQUENCE [LARGE SCALE GENOMIC DNA]</scope>
    <source>
        <strain>DSM 11571 / OCM 486 / SEBR 4847</strain>
    </source>
</reference>
<keyword id="KW-1003">Cell membrane</keyword>
<keyword id="KW-0472">Membrane</keyword>
<keyword id="KW-0653">Protein transport</keyword>
<keyword id="KW-1185">Reference proteome</keyword>
<keyword id="KW-0811">Translocation</keyword>
<keyword id="KW-0812">Transmembrane</keyword>
<keyword id="KW-1133">Transmembrane helix</keyword>
<keyword id="KW-0813">Transport</keyword>
<sequence length="282" mass="30925">MGKFTYDINRYEPKQMVALPLCLLILSVIFLAFNTVSTGMPVEPGIDFAGGVAVTLSTSDSVDVIEDYFADYPLKISESDVAAGYLVFNYLEGDSFKDLTEHITARYPDATIYQMGETFGKTLQSQAIWALLFAFVLMAIVVFVAFRIFIPSVAVVLSAFSDIVITAAFMDVFGLTLSLGTTAALLMLIGYSVDSDVLLTTRLLKRQGKVDEKFRGAFRTGIIMTTTTLAAVVVMFIVFSLGQVTLIRDISAVLIIGLIIDMMNTWMLNAGLLKWYVKKGGK</sequence>
<comment type="function">
    <text evidence="1">Involved in protein export.</text>
</comment>
<comment type="subunit">
    <text evidence="1">Part of the protein translocation apparatus. Forms a complex with SecD.</text>
</comment>
<comment type="subcellular location">
    <subcellularLocation>
        <location evidence="1">Cell membrane</location>
        <topology evidence="1">Multi-pass membrane protein</topology>
    </subcellularLocation>
</comment>
<comment type="similarity">
    <text evidence="1">Belongs to the SecD/SecF family. SecF subfamily.</text>
</comment>
<organism>
    <name type="scientific">Methanolacinia petrolearia (strain DSM 11571 / OCM 486 / SEBR 4847)</name>
    <name type="common">Methanoplanus petrolearius</name>
    <dbReference type="NCBI Taxonomy" id="679926"/>
    <lineage>
        <taxon>Archaea</taxon>
        <taxon>Methanobacteriati</taxon>
        <taxon>Methanobacteriota</taxon>
        <taxon>Stenosarchaea group</taxon>
        <taxon>Methanomicrobia</taxon>
        <taxon>Methanomicrobiales</taxon>
        <taxon>Methanomicrobiaceae</taxon>
        <taxon>Methanolacinia</taxon>
    </lineage>
</organism>
<protein>
    <recommendedName>
        <fullName evidence="1">Protein-export membrane protein SecF</fullName>
    </recommendedName>
</protein>
<feature type="chain" id="PRO_0000412709" description="Protein-export membrane protein SecF">
    <location>
        <begin position="1"/>
        <end position="282"/>
    </location>
</feature>
<feature type="transmembrane region" description="Helical" evidence="1">
    <location>
        <begin position="16"/>
        <end position="36"/>
    </location>
</feature>
<feature type="transmembrane region" description="Helical" evidence="1">
    <location>
        <begin position="126"/>
        <end position="146"/>
    </location>
</feature>
<feature type="transmembrane region" description="Helical" evidence="1">
    <location>
        <begin position="148"/>
        <end position="168"/>
    </location>
</feature>
<feature type="transmembrane region" description="Helical" evidence="1">
    <location>
        <begin position="169"/>
        <end position="189"/>
    </location>
</feature>
<feature type="transmembrane region" description="Helical" evidence="1">
    <location>
        <begin position="221"/>
        <end position="241"/>
    </location>
</feature>
<feature type="transmembrane region" description="Helical" evidence="1">
    <location>
        <begin position="253"/>
        <end position="273"/>
    </location>
</feature>
<evidence type="ECO:0000255" key="1">
    <source>
        <dbReference type="HAMAP-Rule" id="MF_01464"/>
    </source>
</evidence>
<name>SECF_METP4</name>
<gene>
    <name evidence="1" type="primary">secF</name>
    <name type="ordered locus">Mpet_1697</name>
</gene>
<dbReference type="EMBL" id="CP002117">
    <property type="protein sequence ID" value="ADN36450.1"/>
    <property type="molecule type" value="Genomic_DNA"/>
</dbReference>
<dbReference type="RefSeq" id="WP_013329627.1">
    <property type="nucleotide sequence ID" value="NC_014507.1"/>
</dbReference>
<dbReference type="SMR" id="E1RHR2"/>
<dbReference type="STRING" id="679926.Mpet_1697"/>
<dbReference type="GeneID" id="9744169"/>
<dbReference type="KEGG" id="mpi:Mpet_1697"/>
<dbReference type="eggNOG" id="arCOG03054">
    <property type="taxonomic scope" value="Archaea"/>
</dbReference>
<dbReference type="HOGENOM" id="CLU_060478_0_0_2"/>
<dbReference type="OrthoDB" id="85411at2157"/>
<dbReference type="Proteomes" id="UP000006565">
    <property type="component" value="Chromosome"/>
</dbReference>
<dbReference type="GO" id="GO:0005886">
    <property type="term" value="C:plasma membrane"/>
    <property type="evidence" value="ECO:0007669"/>
    <property type="project" value="UniProtKB-SubCell"/>
</dbReference>
<dbReference type="GO" id="GO:0065002">
    <property type="term" value="P:intracellular protein transmembrane transport"/>
    <property type="evidence" value="ECO:0007669"/>
    <property type="project" value="UniProtKB-UniRule"/>
</dbReference>
<dbReference type="GO" id="GO:0006605">
    <property type="term" value="P:protein targeting"/>
    <property type="evidence" value="ECO:0007669"/>
    <property type="project" value="UniProtKB-UniRule"/>
</dbReference>
<dbReference type="Gene3D" id="1.20.1640.10">
    <property type="entry name" value="Multidrug efflux transporter AcrB transmembrane domain"/>
    <property type="match status" value="1"/>
</dbReference>
<dbReference type="HAMAP" id="MF_01464_A">
    <property type="entry name" value="SecF_A"/>
    <property type="match status" value="1"/>
</dbReference>
<dbReference type="InterPro" id="IPR022813">
    <property type="entry name" value="SecD/SecF_arch_bac"/>
</dbReference>
<dbReference type="InterPro" id="IPR048634">
    <property type="entry name" value="SecD_SecF_C"/>
</dbReference>
<dbReference type="InterPro" id="IPR024921">
    <property type="entry name" value="SecF_arc"/>
</dbReference>
<dbReference type="NCBIfam" id="NF006354">
    <property type="entry name" value="PRK08578.1-2"/>
    <property type="match status" value="1"/>
</dbReference>
<dbReference type="PANTHER" id="PTHR30081:SF8">
    <property type="entry name" value="PROTEIN TRANSLOCASE SUBUNIT SECF"/>
    <property type="match status" value="1"/>
</dbReference>
<dbReference type="PANTHER" id="PTHR30081">
    <property type="entry name" value="PROTEIN-EXPORT MEMBRANE PROTEIN SEC"/>
    <property type="match status" value="1"/>
</dbReference>
<dbReference type="Pfam" id="PF02355">
    <property type="entry name" value="SecD_SecF_C"/>
    <property type="match status" value="1"/>
</dbReference>
<dbReference type="SUPFAM" id="SSF82866">
    <property type="entry name" value="Multidrug efflux transporter AcrB transmembrane domain"/>
    <property type="match status" value="1"/>
</dbReference>
<proteinExistence type="inferred from homology"/>